<reference key="1">
    <citation type="journal article" date="2011" name="Stand. Genomic Sci.">
        <title>Complete genome sequence of Parvibaculum lavamentivorans type strain (DS-1(T)).</title>
        <authorList>
            <person name="Schleheck D."/>
            <person name="Weiss M."/>
            <person name="Pitluck S."/>
            <person name="Bruce D."/>
            <person name="Land M.L."/>
            <person name="Han S."/>
            <person name="Saunders E."/>
            <person name="Tapia R."/>
            <person name="Detter C."/>
            <person name="Brettin T."/>
            <person name="Han J."/>
            <person name="Woyke T."/>
            <person name="Goodwin L."/>
            <person name="Pennacchio L."/>
            <person name="Nolan M."/>
            <person name="Cook A.M."/>
            <person name="Kjelleberg S."/>
            <person name="Thomas T."/>
        </authorList>
    </citation>
    <scope>NUCLEOTIDE SEQUENCE [LARGE SCALE GENOMIC DNA]</scope>
    <source>
        <strain>DS-1 / DSM 13023 / NCIMB 13966</strain>
    </source>
</reference>
<evidence type="ECO:0000255" key="1">
    <source>
        <dbReference type="HAMAP-Rule" id="MF_00082"/>
    </source>
</evidence>
<protein>
    <recommendedName>
        <fullName evidence="1">Acetylglutamate kinase</fullName>
        <ecNumber evidence="1">2.7.2.8</ecNumber>
    </recommendedName>
    <alternativeName>
        <fullName evidence="1">N-acetyl-L-glutamate 5-phosphotransferase</fullName>
    </alternativeName>
    <alternativeName>
        <fullName evidence="1">NAG kinase</fullName>
        <shortName evidence="1">NAGK</shortName>
    </alternativeName>
</protein>
<keyword id="KW-0028">Amino-acid biosynthesis</keyword>
<keyword id="KW-0055">Arginine biosynthesis</keyword>
<keyword id="KW-0067">ATP-binding</keyword>
<keyword id="KW-0963">Cytoplasm</keyword>
<keyword id="KW-0418">Kinase</keyword>
<keyword id="KW-0547">Nucleotide-binding</keyword>
<keyword id="KW-1185">Reference proteome</keyword>
<keyword id="KW-0808">Transferase</keyword>
<feature type="chain" id="PRO_0000335651" description="Acetylglutamate kinase">
    <location>
        <begin position="1"/>
        <end position="304"/>
    </location>
</feature>
<feature type="binding site" evidence="1">
    <location>
        <begin position="75"/>
        <end position="76"/>
    </location>
    <ligand>
        <name>substrate</name>
    </ligand>
</feature>
<feature type="binding site" evidence="1">
    <location>
        <position position="97"/>
    </location>
    <ligand>
        <name>substrate</name>
    </ligand>
</feature>
<feature type="binding site" evidence="1">
    <location>
        <position position="202"/>
    </location>
    <ligand>
        <name>substrate</name>
    </ligand>
</feature>
<feature type="site" description="Transition state stabilizer" evidence="1">
    <location>
        <position position="40"/>
    </location>
</feature>
<feature type="site" description="Transition state stabilizer" evidence="1">
    <location>
        <position position="262"/>
    </location>
</feature>
<organism>
    <name type="scientific">Parvibaculum lavamentivorans (strain DS-1 / DSM 13023 / NCIMB 13966)</name>
    <dbReference type="NCBI Taxonomy" id="402881"/>
    <lineage>
        <taxon>Bacteria</taxon>
        <taxon>Pseudomonadati</taxon>
        <taxon>Pseudomonadota</taxon>
        <taxon>Alphaproteobacteria</taxon>
        <taxon>Hyphomicrobiales</taxon>
        <taxon>Parvibaculaceae</taxon>
        <taxon>Parvibaculum</taxon>
    </lineage>
</organism>
<proteinExistence type="inferred from homology"/>
<accession>A7HPT7</accession>
<comment type="function">
    <text evidence="1">Catalyzes the ATP-dependent phosphorylation of N-acetyl-L-glutamate.</text>
</comment>
<comment type="catalytic activity">
    <reaction evidence="1">
        <text>N-acetyl-L-glutamate + ATP = N-acetyl-L-glutamyl 5-phosphate + ADP</text>
        <dbReference type="Rhea" id="RHEA:14629"/>
        <dbReference type="ChEBI" id="CHEBI:30616"/>
        <dbReference type="ChEBI" id="CHEBI:44337"/>
        <dbReference type="ChEBI" id="CHEBI:57936"/>
        <dbReference type="ChEBI" id="CHEBI:456216"/>
        <dbReference type="EC" id="2.7.2.8"/>
    </reaction>
</comment>
<comment type="pathway">
    <text evidence="1">Amino-acid biosynthesis; L-arginine biosynthesis; N(2)-acetyl-L-ornithine from L-glutamate: step 2/4.</text>
</comment>
<comment type="subcellular location">
    <subcellularLocation>
        <location evidence="1">Cytoplasm</location>
    </subcellularLocation>
</comment>
<comment type="similarity">
    <text evidence="1">Belongs to the acetylglutamate kinase family. ArgB subfamily.</text>
</comment>
<gene>
    <name evidence="1" type="primary">argB</name>
    <name type="ordered locus">Plav_0297</name>
</gene>
<name>ARGB_PARL1</name>
<dbReference type="EC" id="2.7.2.8" evidence="1"/>
<dbReference type="EMBL" id="CP000774">
    <property type="protein sequence ID" value="ABS61920.1"/>
    <property type="molecule type" value="Genomic_DNA"/>
</dbReference>
<dbReference type="RefSeq" id="WP_011995211.1">
    <property type="nucleotide sequence ID" value="NC_009719.1"/>
</dbReference>
<dbReference type="SMR" id="A7HPT7"/>
<dbReference type="STRING" id="402881.Plav_0297"/>
<dbReference type="KEGG" id="pla:Plav_0297"/>
<dbReference type="eggNOG" id="COG0548">
    <property type="taxonomic scope" value="Bacteria"/>
</dbReference>
<dbReference type="HOGENOM" id="CLU_053680_0_0_5"/>
<dbReference type="OrthoDB" id="9803155at2"/>
<dbReference type="UniPathway" id="UPA00068">
    <property type="reaction ID" value="UER00107"/>
</dbReference>
<dbReference type="Proteomes" id="UP000006377">
    <property type="component" value="Chromosome"/>
</dbReference>
<dbReference type="GO" id="GO:0005737">
    <property type="term" value="C:cytoplasm"/>
    <property type="evidence" value="ECO:0007669"/>
    <property type="project" value="UniProtKB-SubCell"/>
</dbReference>
<dbReference type="GO" id="GO:0003991">
    <property type="term" value="F:acetylglutamate kinase activity"/>
    <property type="evidence" value="ECO:0007669"/>
    <property type="project" value="UniProtKB-UniRule"/>
</dbReference>
<dbReference type="GO" id="GO:0005524">
    <property type="term" value="F:ATP binding"/>
    <property type="evidence" value="ECO:0007669"/>
    <property type="project" value="UniProtKB-UniRule"/>
</dbReference>
<dbReference type="GO" id="GO:0042450">
    <property type="term" value="P:arginine biosynthetic process via ornithine"/>
    <property type="evidence" value="ECO:0007669"/>
    <property type="project" value="UniProtKB-UniRule"/>
</dbReference>
<dbReference type="GO" id="GO:0006526">
    <property type="term" value="P:L-arginine biosynthetic process"/>
    <property type="evidence" value="ECO:0007669"/>
    <property type="project" value="UniProtKB-UniPathway"/>
</dbReference>
<dbReference type="CDD" id="cd04250">
    <property type="entry name" value="AAK_NAGK-C"/>
    <property type="match status" value="1"/>
</dbReference>
<dbReference type="FunFam" id="3.40.1160.10:FF:000004">
    <property type="entry name" value="Acetylglutamate kinase"/>
    <property type="match status" value="1"/>
</dbReference>
<dbReference type="Gene3D" id="3.40.1160.10">
    <property type="entry name" value="Acetylglutamate kinase-like"/>
    <property type="match status" value="1"/>
</dbReference>
<dbReference type="HAMAP" id="MF_00082">
    <property type="entry name" value="ArgB"/>
    <property type="match status" value="1"/>
</dbReference>
<dbReference type="InterPro" id="IPR036393">
    <property type="entry name" value="AceGlu_kinase-like_sf"/>
</dbReference>
<dbReference type="InterPro" id="IPR004662">
    <property type="entry name" value="AcgluKinase_fam"/>
</dbReference>
<dbReference type="InterPro" id="IPR037528">
    <property type="entry name" value="ArgB"/>
</dbReference>
<dbReference type="InterPro" id="IPR001048">
    <property type="entry name" value="Asp/Glu/Uridylate_kinase"/>
</dbReference>
<dbReference type="InterPro" id="IPR001057">
    <property type="entry name" value="Glu/AcGlu_kinase"/>
</dbReference>
<dbReference type="InterPro" id="IPR041727">
    <property type="entry name" value="NAGK-C"/>
</dbReference>
<dbReference type="NCBIfam" id="TIGR00761">
    <property type="entry name" value="argB"/>
    <property type="match status" value="1"/>
</dbReference>
<dbReference type="PANTHER" id="PTHR23342">
    <property type="entry name" value="N-ACETYLGLUTAMATE SYNTHASE"/>
    <property type="match status" value="1"/>
</dbReference>
<dbReference type="PANTHER" id="PTHR23342:SF0">
    <property type="entry name" value="N-ACETYLGLUTAMATE SYNTHASE, MITOCHONDRIAL"/>
    <property type="match status" value="1"/>
</dbReference>
<dbReference type="Pfam" id="PF00696">
    <property type="entry name" value="AA_kinase"/>
    <property type="match status" value="1"/>
</dbReference>
<dbReference type="PIRSF" id="PIRSF000728">
    <property type="entry name" value="NAGK"/>
    <property type="match status" value="1"/>
</dbReference>
<dbReference type="PRINTS" id="PR00474">
    <property type="entry name" value="GLU5KINASE"/>
</dbReference>
<dbReference type="SUPFAM" id="SSF53633">
    <property type="entry name" value="Carbamate kinase-like"/>
    <property type="match status" value="1"/>
</dbReference>
<sequence>MPDTDKGAKPQDDSRLERARILSEALPFMQRYDKRTVVVKYGGHAMGDEELGAEFARDIVLLKQAGLNPIVVHGGGPQIGAMLNRLGIKSEFSGGLRITDKATVEIVEMVLAGSINKQIVAQLNQAGGRAVGLCGKDGNLVVARKVHQKVHDPESNIEKLLDLGFVGEPEKINPEILDVIQKSDIIPVIAPVGVSRDGHTYNINADTVAGAIAAAMGAARLLLLTDVTGVLGKDGKLIEALTVAEAKALMKDGTISGGMIPKLETCIESVEGGVEAVVILDGRVRHAVLLELFTELGAGTLIQK</sequence>